<feature type="chain" id="PRO_0000048884" description="Homeobox protein CHOX-7">
    <location>
        <begin position="1" status="less than"/>
        <end position="124"/>
    </location>
</feature>
<feature type="DNA-binding region" description="Homeobox" evidence="1">
    <location>
        <begin position="24"/>
        <end position="83"/>
    </location>
</feature>
<feature type="region of interest" description="Disordered" evidence="2">
    <location>
        <begin position="1"/>
        <end position="30"/>
    </location>
</feature>
<feature type="region of interest" description="Disordered" evidence="2">
    <location>
        <begin position="83"/>
        <end position="124"/>
    </location>
</feature>
<feature type="non-terminal residue">
    <location>
        <position position="1"/>
    </location>
</feature>
<name>HM7X_CHICK</name>
<proteinExistence type="predicted"/>
<gene>
    <name type="primary">CHOX-7</name>
</gene>
<accession>P15142</accession>
<sequence length="124" mass="13683">GPKGKGKGGPAAEQPPPGSGAGKSRRRRTAFTSEQLLELEKEFHCKKYLSLTERSQIAHALKLSEVQVKIWFQNRRAKWKRIKAGNVSNRSGEPVRNPKIVRAHPGARQSLRRAQPAPADRAGA</sequence>
<organism>
    <name type="scientific">Gallus gallus</name>
    <name type="common">Chicken</name>
    <dbReference type="NCBI Taxonomy" id="9031"/>
    <lineage>
        <taxon>Eukaryota</taxon>
        <taxon>Metazoa</taxon>
        <taxon>Chordata</taxon>
        <taxon>Craniata</taxon>
        <taxon>Vertebrata</taxon>
        <taxon>Euteleostomi</taxon>
        <taxon>Archelosauria</taxon>
        <taxon>Archosauria</taxon>
        <taxon>Dinosauria</taxon>
        <taxon>Saurischia</taxon>
        <taxon>Theropoda</taxon>
        <taxon>Coelurosauria</taxon>
        <taxon>Aves</taxon>
        <taxon>Neognathae</taxon>
        <taxon>Galloanserae</taxon>
        <taxon>Galliformes</taxon>
        <taxon>Phasianidae</taxon>
        <taxon>Phasianinae</taxon>
        <taxon>Gallus</taxon>
    </lineage>
</organism>
<reference key="1">
    <citation type="journal article" date="1989" name="FEBS Lett.">
        <title>A chicken homeo box gene with developmentally regulated expression.</title>
        <authorList>
            <person name="Fainsod A."/>
            <person name="Gruenbaum Y."/>
        </authorList>
    </citation>
    <scope>NUCLEOTIDE SEQUENCE [GENOMIC DNA]</scope>
</reference>
<protein>
    <recommendedName>
        <fullName>Homeobox protein CHOX-7</fullName>
    </recommendedName>
</protein>
<dbReference type="EMBL" id="X16159">
    <property type="protein sequence ID" value="CAA34285.1"/>
    <property type="molecule type" value="Genomic_DNA"/>
</dbReference>
<dbReference type="PIR" id="S05005">
    <property type="entry name" value="S05005"/>
</dbReference>
<dbReference type="SMR" id="P15142"/>
<dbReference type="FunCoup" id="P15142">
    <property type="interactions" value="262"/>
</dbReference>
<dbReference type="PaxDb" id="9031-ENSGALP00000041607"/>
<dbReference type="VEuPathDB" id="HostDB:LOC395377"/>
<dbReference type="eggNOG" id="KOG0489">
    <property type="taxonomic scope" value="Eukaryota"/>
</dbReference>
<dbReference type="InParanoid" id="P15142"/>
<dbReference type="PhylomeDB" id="P15142"/>
<dbReference type="Proteomes" id="UP000000539">
    <property type="component" value="Unassembled WGS sequence"/>
</dbReference>
<dbReference type="GO" id="GO:0005634">
    <property type="term" value="C:nucleus"/>
    <property type="evidence" value="ECO:0000318"/>
    <property type="project" value="GO_Central"/>
</dbReference>
<dbReference type="GO" id="GO:0000981">
    <property type="term" value="F:DNA-binding transcription factor activity, RNA polymerase II-specific"/>
    <property type="evidence" value="ECO:0000318"/>
    <property type="project" value="GO_Central"/>
</dbReference>
<dbReference type="GO" id="GO:0000977">
    <property type="term" value="F:RNA polymerase II transcription regulatory region sequence-specific DNA binding"/>
    <property type="evidence" value="ECO:0000318"/>
    <property type="project" value="GO_Central"/>
</dbReference>
<dbReference type="GO" id="GO:0051960">
    <property type="term" value="P:regulation of nervous system development"/>
    <property type="evidence" value="ECO:0000318"/>
    <property type="project" value="GO_Central"/>
</dbReference>
<dbReference type="GO" id="GO:0006357">
    <property type="term" value="P:regulation of transcription by RNA polymerase II"/>
    <property type="evidence" value="ECO:0000318"/>
    <property type="project" value="GO_Central"/>
</dbReference>
<dbReference type="CDD" id="cd00086">
    <property type="entry name" value="homeodomain"/>
    <property type="match status" value="1"/>
</dbReference>
<dbReference type="FunFam" id="1.10.10.60:FF:000360">
    <property type="entry name" value="Gastrulation brain homeobox"/>
    <property type="match status" value="1"/>
</dbReference>
<dbReference type="Gene3D" id="1.10.10.60">
    <property type="entry name" value="Homeodomain-like"/>
    <property type="match status" value="1"/>
</dbReference>
<dbReference type="InterPro" id="IPR042982">
    <property type="entry name" value="GBX-1/2"/>
</dbReference>
<dbReference type="InterPro" id="IPR001356">
    <property type="entry name" value="HD"/>
</dbReference>
<dbReference type="InterPro" id="IPR020479">
    <property type="entry name" value="HD_metazoa"/>
</dbReference>
<dbReference type="InterPro" id="IPR017970">
    <property type="entry name" value="Homeobox_CS"/>
</dbReference>
<dbReference type="InterPro" id="IPR009057">
    <property type="entry name" value="Homeodomain-like_sf"/>
</dbReference>
<dbReference type="PANTHER" id="PTHR24334">
    <property type="entry name" value="HOMEOBOX PROTEIN GBX"/>
    <property type="match status" value="1"/>
</dbReference>
<dbReference type="PANTHER" id="PTHR24334:SF2">
    <property type="entry name" value="HOMEOBOX PROTEIN GBX-1"/>
    <property type="match status" value="1"/>
</dbReference>
<dbReference type="Pfam" id="PF00046">
    <property type="entry name" value="Homeodomain"/>
    <property type="match status" value="1"/>
</dbReference>
<dbReference type="PRINTS" id="PR00024">
    <property type="entry name" value="HOMEOBOX"/>
</dbReference>
<dbReference type="SMART" id="SM00389">
    <property type="entry name" value="HOX"/>
    <property type="match status" value="1"/>
</dbReference>
<dbReference type="SUPFAM" id="SSF46689">
    <property type="entry name" value="Homeodomain-like"/>
    <property type="match status" value="1"/>
</dbReference>
<dbReference type="PROSITE" id="PS00027">
    <property type="entry name" value="HOMEOBOX_1"/>
    <property type="match status" value="1"/>
</dbReference>
<dbReference type="PROSITE" id="PS50071">
    <property type="entry name" value="HOMEOBOX_2"/>
    <property type="match status" value="1"/>
</dbReference>
<keyword id="KW-0217">Developmental protein</keyword>
<keyword id="KW-0238">DNA-binding</keyword>
<keyword id="KW-0371">Homeobox</keyword>
<keyword id="KW-0539">Nucleus</keyword>
<keyword id="KW-1185">Reference proteome</keyword>
<comment type="subcellular location">
    <subcellularLocation>
        <location evidence="3">Nucleus</location>
    </subcellularLocation>
</comment>
<evidence type="ECO:0000255" key="1">
    <source>
        <dbReference type="PROSITE-ProRule" id="PRU00108"/>
    </source>
</evidence>
<evidence type="ECO:0000256" key="2">
    <source>
        <dbReference type="SAM" id="MobiDB-lite"/>
    </source>
</evidence>
<evidence type="ECO:0000305" key="3"/>